<proteinExistence type="evidence at transcript level"/>
<protein>
    <recommendedName>
        <fullName evidence="4">Cuticle collagen 71</fullName>
    </recommendedName>
</protein>
<dbReference type="EMBL" id="BX284602">
    <property type="protein sequence ID" value="CCD64720.1"/>
    <property type="molecule type" value="Genomic_DNA"/>
</dbReference>
<dbReference type="RefSeq" id="NP_494562.1">
    <property type="nucleotide sequence ID" value="NM_062161.5"/>
</dbReference>
<dbReference type="DIP" id="DIP-26702N"/>
<dbReference type="FunCoup" id="Q9N4U2">
    <property type="interactions" value="1587"/>
</dbReference>
<dbReference type="STRING" id="6239.Y49F6B.10.1"/>
<dbReference type="PaxDb" id="6239-Y49F6B.10"/>
<dbReference type="PeptideAtlas" id="Q9N4U2"/>
<dbReference type="EnsemblMetazoa" id="Y49F6B.10.1">
    <property type="protein sequence ID" value="Y49F6B.10.1"/>
    <property type="gene ID" value="WBGene00000647"/>
</dbReference>
<dbReference type="GeneID" id="173695"/>
<dbReference type="KEGG" id="cel:CELE_Y49F6B.10"/>
<dbReference type="UCSC" id="Y49F6B.10">
    <property type="organism name" value="c. elegans"/>
</dbReference>
<dbReference type="AGR" id="WB:WBGene00000647"/>
<dbReference type="CTD" id="173695"/>
<dbReference type="WormBase" id="Y49F6B.10">
    <property type="protein sequence ID" value="CE25334"/>
    <property type="gene ID" value="WBGene00000647"/>
    <property type="gene designation" value="col-71"/>
</dbReference>
<dbReference type="eggNOG" id="KOG3544">
    <property type="taxonomic scope" value="Eukaryota"/>
</dbReference>
<dbReference type="HOGENOM" id="CLU_001074_4_2_1"/>
<dbReference type="InParanoid" id="Q9N4U2"/>
<dbReference type="OMA" id="CNVNARQ"/>
<dbReference type="OrthoDB" id="5858192at2759"/>
<dbReference type="PhylomeDB" id="Q9N4U2"/>
<dbReference type="PRO" id="PR:Q9N4U2"/>
<dbReference type="Proteomes" id="UP000001940">
    <property type="component" value="Chromosome II"/>
</dbReference>
<dbReference type="Bgee" id="WBGene00000647">
    <property type="expression patterns" value="Expressed in material anatomical entity and 3 other cell types or tissues"/>
</dbReference>
<dbReference type="GO" id="GO:0016020">
    <property type="term" value="C:membrane"/>
    <property type="evidence" value="ECO:0007669"/>
    <property type="project" value="UniProtKB-SubCell"/>
</dbReference>
<dbReference type="GO" id="GO:0005634">
    <property type="term" value="C:nucleus"/>
    <property type="evidence" value="ECO:0007669"/>
    <property type="project" value="UniProtKB-SubCell"/>
</dbReference>
<dbReference type="GO" id="GO:0042302">
    <property type="term" value="F:structural constituent of cuticle"/>
    <property type="evidence" value="ECO:0007669"/>
    <property type="project" value="InterPro"/>
</dbReference>
<dbReference type="GO" id="GO:0040002">
    <property type="term" value="P:collagen and cuticulin-based cuticle development"/>
    <property type="evidence" value="ECO:0000315"/>
    <property type="project" value="UniProtKB"/>
</dbReference>
<dbReference type="InterPro" id="IPR002486">
    <property type="entry name" value="Col_cuticle_N"/>
</dbReference>
<dbReference type="InterPro" id="IPR008160">
    <property type="entry name" value="Collagen"/>
</dbReference>
<dbReference type="PANTHER" id="PTHR24637">
    <property type="entry name" value="COLLAGEN"/>
    <property type="match status" value="1"/>
</dbReference>
<dbReference type="PANTHER" id="PTHR24637:SF431">
    <property type="entry name" value="CUTICLE COLLAGEN 71"/>
    <property type="match status" value="1"/>
</dbReference>
<dbReference type="Pfam" id="PF01484">
    <property type="entry name" value="Col_cuticle_N"/>
    <property type="match status" value="1"/>
</dbReference>
<dbReference type="Pfam" id="PF01391">
    <property type="entry name" value="Collagen"/>
    <property type="match status" value="1"/>
</dbReference>
<dbReference type="SMART" id="SM01088">
    <property type="entry name" value="Col_cuticle_N"/>
    <property type="match status" value="1"/>
</dbReference>
<keyword id="KW-1015">Disulfide bond</keyword>
<keyword id="KW-0472">Membrane</keyword>
<keyword id="KW-0539">Nucleus</keyword>
<keyword id="KW-1185">Reference proteome</keyword>
<keyword id="KW-0677">Repeat</keyword>
<keyword id="KW-0812">Transmembrane</keyword>
<keyword id="KW-1133">Transmembrane helix</keyword>
<feature type="chain" id="PRO_0000455700" description="Cuticle collagen 71">
    <location>
        <begin position="1"/>
        <end position="371"/>
    </location>
</feature>
<feature type="transmembrane region" description="Helical" evidence="1">
    <location>
        <begin position="38"/>
        <end position="60"/>
    </location>
</feature>
<feature type="domain" description="Collagen-like" evidence="1">
    <location>
        <begin position="223"/>
        <end position="280"/>
    </location>
</feature>
<feature type="region of interest" description="Disordered" evidence="2">
    <location>
        <begin position="108"/>
        <end position="127"/>
    </location>
</feature>
<feature type="region of interest" description="Disordered" evidence="2">
    <location>
        <begin position="153"/>
        <end position="371"/>
    </location>
</feature>
<feature type="compositionally biased region" description="Pro residues" evidence="2">
    <location>
        <begin position="174"/>
        <end position="186"/>
    </location>
</feature>
<feature type="compositionally biased region" description="Low complexity" evidence="2">
    <location>
        <begin position="188"/>
        <end position="201"/>
    </location>
</feature>
<feature type="compositionally biased region" description="Pro residues" evidence="2">
    <location>
        <begin position="202"/>
        <end position="222"/>
    </location>
</feature>
<feature type="compositionally biased region" description="Low complexity" evidence="2">
    <location>
        <begin position="223"/>
        <end position="240"/>
    </location>
</feature>
<feature type="compositionally biased region" description="Basic and acidic residues" evidence="2">
    <location>
        <begin position="246"/>
        <end position="260"/>
    </location>
</feature>
<feature type="compositionally biased region" description="Low complexity" evidence="2">
    <location>
        <begin position="314"/>
        <end position="323"/>
    </location>
</feature>
<feature type="compositionally biased region" description="Basic and acidic residues" evidence="2">
    <location>
        <begin position="340"/>
        <end position="349"/>
    </location>
</feature>
<comment type="function">
    <text evidence="3 6">Probable cuticular collagen-like protein (Probable). Nematode cuticles are composed largely of collagen-like proteins (Probable). The cuticle functions both as an exoskeleton and as a barrier to protect the worm from its environment (Probable). Acts downstream of the Wnt signaling pathway, perhaps in the formation of the adult cuticle (PubMed:24569038).</text>
</comment>
<comment type="subunit">
    <text evidence="6">Collagen polypeptide chains are complexed within the cuticle by disulfide bonds and other types of covalent cross-links.</text>
</comment>
<comment type="subcellular location">
    <subcellularLocation>
        <location evidence="1">Membrane</location>
        <topology evidence="1">Single-pass membrane protein</topology>
    </subcellularLocation>
    <subcellularLocation>
        <location evidence="3">Nucleus</location>
    </subcellularLocation>
</comment>
<comment type="developmental stage">
    <text evidence="3">Expressed in hypodermal cells and seam cells, in the larval L4 stage, and in the young adult (PubMed:24569038). Not expressed in the cells of the developing vulva (PubMed:24569038).</text>
</comment>
<comment type="disruption phenotype">
    <text evidence="3">RNAi-mediated knockdown causes hypodermal or cuticular rupture, typically in the anterior body region (PubMed:24569038). Dumpy body shape (PubMed:24569038). Defects in cuticle integrity (PubMed:24569038).</text>
</comment>
<comment type="similarity">
    <text evidence="5">Belongs to the cuticular collagen family.</text>
</comment>
<reference evidence="7" key="1">
    <citation type="journal article" date="1998" name="Science">
        <title>Genome sequence of the nematode C. elegans: a platform for investigating biology.</title>
        <authorList>
            <consortium name="The C. elegans sequencing consortium"/>
        </authorList>
    </citation>
    <scope>NUCLEOTIDE SEQUENCE [LARGE SCALE GENOMIC DNA]</scope>
    <source>
        <strain evidence="7">Bristol N2</strain>
    </source>
</reference>
<reference evidence="5" key="2">
    <citation type="journal article" date="2014" name="G3 (Bethesda)">
        <title>Use of an activated beta-catenin to identify Wnt pathway target genes in caenorhabditis elegans, including a subset of collagen genes expressed in late larval development.</title>
        <authorList>
            <person name="Jackson B.M."/>
            <person name="Abete-Luzi P."/>
            <person name="Krause M.W."/>
            <person name="Eisenmann D.M."/>
        </authorList>
    </citation>
    <scope>FUNCTION</scope>
    <scope>DEVELOPMENTAL STAGE</scope>
    <scope>DISRUPTION PHENOTYPE</scope>
</reference>
<organism evidence="7">
    <name type="scientific">Caenorhabditis elegans</name>
    <dbReference type="NCBI Taxonomy" id="6239"/>
    <lineage>
        <taxon>Eukaryota</taxon>
        <taxon>Metazoa</taxon>
        <taxon>Ecdysozoa</taxon>
        <taxon>Nematoda</taxon>
        <taxon>Chromadorea</taxon>
        <taxon>Rhabditida</taxon>
        <taxon>Rhabditina</taxon>
        <taxon>Rhabditomorpha</taxon>
        <taxon>Rhabditoidea</taxon>
        <taxon>Rhabditidae</taxon>
        <taxon>Peloderinae</taxon>
        <taxon>Caenorhabditis</taxon>
    </lineage>
</organism>
<name>COL71_CAEEL</name>
<sequence length="371" mass="37071">MRNAGGDKPFSTPVLLREMGLKTHVDDDPKTKAYRLIGYAAVTFSTVSVICFCVTMPVVFTYVQSVKRQMSHEMATCNVNARQIFDDVAALRAGFPFAQAGNRTARQAGYDVHPSKPTPVGYSGGDAAAAEVKGNSPAAAYEDKPFVAVGVEEGPHTATTGSDSEGTCHDCCLPGPPGPPGPPGRPGPNGKAGANGLNGNPGRPPEAPCEPVTPPPCPPCPAGPKGAPGQAGYPGADGQPGSQGDNGEKGSDGAAGEKGRPGPLGKIGEPGATGETGENAENSEPTPGPQGPPGAIGPVGSRGTPGHPGEDGEAGAPGAPGENGTDGENGEDGVPGVPGHDGKAGRAGERGICPKYCAKDGGIFFEDGTRR</sequence>
<accession>Q9N4U2</accession>
<gene>
    <name evidence="8" type="primary">col-71</name>
    <name evidence="8" type="ORF">Y49F6B.10</name>
</gene>
<evidence type="ECO:0000255" key="1"/>
<evidence type="ECO:0000256" key="2">
    <source>
        <dbReference type="SAM" id="MobiDB-lite"/>
    </source>
</evidence>
<evidence type="ECO:0000269" key="3">
    <source>
    </source>
</evidence>
<evidence type="ECO:0000303" key="4">
    <source>
    </source>
</evidence>
<evidence type="ECO:0000305" key="5"/>
<evidence type="ECO:0000305" key="6">
    <source>
    </source>
</evidence>
<evidence type="ECO:0000312" key="7">
    <source>
        <dbReference type="Proteomes" id="UP000001940"/>
    </source>
</evidence>
<evidence type="ECO:0000312" key="8">
    <source>
        <dbReference type="WormBase" id="Y49F6B.10"/>
    </source>
</evidence>